<name>FLHD_ECOL5</name>
<sequence>MHTSELLKHIYDINLSYLLLAQRLIVQDKASAMFRLGINEEMATTLAALTLPQMVKLAETNQLVCHFRFDSHQTITQLTQDSRVDDLQQIHTGIMLSTRLLNDVNQPEEALRKKRA</sequence>
<accession>Q0TGU2</accession>
<gene>
    <name evidence="1" type="primary">flhD</name>
    <name type="ordered locus">ECP_1836</name>
</gene>
<organism>
    <name type="scientific">Escherichia coli O6:K15:H31 (strain 536 / UPEC)</name>
    <dbReference type="NCBI Taxonomy" id="362663"/>
    <lineage>
        <taxon>Bacteria</taxon>
        <taxon>Pseudomonadati</taxon>
        <taxon>Pseudomonadota</taxon>
        <taxon>Gammaproteobacteria</taxon>
        <taxon>Enterobacterales</taxon>
        <taxon>Enterobacteriaceae</taxon>
        <taxon>Escherichia</taxon>
    </lineage>
</organism>
<feature type="chain" id="PRO_1000045883" description="Flagellar transcriptional regulator FlhD">
    <location>
        <begin position="1"/>
        <end position="116"/>
    </location>
</feature>
<feature type="disulfide bond" description="Interchain" evidence="1">
    <location>
        <position position="65"/>
    </location>
</feature>
<protein>
    <recommendedName>
        <fullName evidence="1">Flagellar transcriptional regulator FlhD</fullName>
    </recommendedName>
</protein>
<comment type="function">
    <text evidence="1">Functions in complex with FlhC as a master transcriptional regulator that regulates transcription of several flagellar and non-flagellar operons by binding to their promoter region. Activates expression of class 2 flagellar genes, including fliA, which is a flagellum-specific sigma factor that turns on the class 3 genes. Also regulates genes whose products function in a variety of physiological pathways.</text>
</comment>
<comment type="subunit">
    <text evidence="1">Homodimer; disulfide-linked. Forms a heterohexamer composed of two FlhC and four FlhD subunits. Each FlhC binds a FlhD dimer, forming a heterotrimer, and a hexamer assembles by dimerization of two heterotrimers.</text>
</comment>
<comment type="subcellular location">
    <subcellularLocation>
        <location evidence="1">Cytoplasm</location>
    </subcellularLocation>
</comment>
<comment type="domain">
    <text evidence="1">The C-terminal region contains a putative helix-turn-helix (HTH) motif, suggesting that this region may bind DNA.</text>
</comment>
<comment type="similarity">
    <text evidence="1">Belongs to the FlhD family.</text>
</comment>
<keyword id="KW-0010">Activator</keyword>
<keyword id="KW-1005">Bacterial flagellum biogenesis</keyword>
<keyword id="KW-0963">Cytoplasm</keyword>
<keyword id="KW-1015">Disulfide bond</keyword>
<keyword id="KW-0238">DNA-binding</keyword>
<keyword id="KW-0804">Transcription</keyword>
<keyword id="KW-0805">Transcription regulation</keyword>
<evidence type="ECO:0000255" key="1">
    <source>
        <dbReference type="HAMAP-Rule" id="MF_00725"/>
    </source>
</evidence>
<proteinExistence type="inferred from homology"/>
<dbReference type="EMBL" id="CP000247">
    <property type="protein sequence ID" value="ABG69837.1"/>
    <property type="molecule type" value="Genomic_DNA"/>
</dbReference>
<dbReference type="RefSeq" id="WP_001295647.1">
    <property type="nucleotide sequence ID" value="NC_008253.1"/>
</dbReference>
<dbReference type="SMR" id="Q0TGU2"/>
<dbReference type="GeneID" id="93776197"/>
<dbReference type="KEGG" id="ecp:ECP_1836"/>
<dbReference type="HOGENOM" id="CLU_144160_0_0_6"/>
<dbReference type="Proteomes" id="UP000009182">
    <property type="component" value="Chromosome"/>
</dbReference>
<dbReference type="GO" id="GO:0005737">
    <property type="term" value="C:cytoplasm"/>
    <property type="evidence" value="ECO:0007669"/>
    <property type="project" value="UniProtKB-SubCell"/>
</dbReference>
<dbReference type="GO" id="GO:0003677">
    <property type="term" value="F:DNA binding"/>
    <property type="evidence" value="ECO:0007669"/>
    <property type="project" value="UniProtKB-UniRule"/>
</dbReference>
<dbReference type="GO" id="GO:0044780">
    <property type="term" value="P:bacterial-type flagellum assembly"/>
    <property type="evidence" value="ECO:0007669"/>
    <property type="project" value="InterPro"/>
</dbReference>
<dbReference type="GO" id="GO:0045893">
    <property type="term" value="P:positive regulation of DNA-templated transcription"/>
    <property type="evidence" value="ECO:0007669"/>
    <property type="project" value="InterPro"/>
</dbReference>
<dbReference type="GO" id="GO:1902208">
    <property type="term" value="P:regulation of bacterial-type flagellum assembly"/>
    <property type="evidence" value="ECO:0007669"/>
    <property type="project" value="UniProtKB-UniRule"/>
</dbReference>
<dbReference type="FunFam" id="1.10.4000.10:FF:000001">
    <property type="entry name" value="Flagellar transcriptional regulator FlhD"/>
    <property type="match status" value="1"/>
</dbReference>
<dbReference type="Gene3D" id="1.10.4000.10">
    <property type="entry name" value="Flagellar transcriptional activator FlhD"/>
    <property type="match status" value="1"/>
</dbReference>
<dbReference type="HAMAP" id="MF_00725">
    <property type="entry name" value="FlhD"/>
    <property type="match status" value="1"/>
</dbReference>
<dbReference type="InterPro" id="IPR023559">
    <property type="entry name" value="Flagellar_FlhD"/>
</dbReference>
<dbReference type="InterPro" id="IPR036194">
    <property type="entry name" value="FlhD_sf"/>
</dbReference>
<dbReference type="NCBIfam" id="NF002783">
    <property type="entry name" value="PRK02909.1-1"/>
    <property type="match status" value="1"/>
</dbReference>
<dbReference type="Pfam" id="PF05247">
    <property type="entry name" value="FlhD"/>
    <property type="match status" value="1"/>
</dbReference>
<dbReference type="SUPFAM" id="SSF63592">
    <property type="entry name" value="Flagellar transcriptional activator FlhD"/>
    <property type="match status" value="1"/>
</dbReference>
<reference key="1">
    <citation type="journal article" date="2006" name="Mol. Microbiol.">
        <title>Role of pathogenicity island-associated integrases in the genome plasticity of uropathogenic Escherichia coli strain 536.</title>
        <authorList>
            <person name="Hochhut B."/>
            <person name="Wilde C."/>
            <person name="Balling G."/>
            <person name="Middendorf B."/>
            <person name="Dobrindt U."/>
            <person name="Brzuszkiewicz E."/>
            <person name="Gottschalk G."/>
            <person name="Carniel E."/>
            <person name="Hacker J."/>
        </authorList>
    </citation>
    <scope>NUCLEOTIDE SEQUENCE [LARGE SCALE GENOMIC DNA]</scope>
    <source>
        <strain>536 / UPEC</strain>
    </source>
</reference>